<feature type="chain" id="PRO_0000061215" description="Cytochrome b">
    <location>
        <begin position="1"/>
        <end position="379"/>
    </location>
</feature>
<feature type="transmembrane region" description="Helical" evidence="2">
    <location>
        <begin position="33"/>
        <end position="53"/>
    </location>
</feature>
<feature type="transmembrane region" description="Helical" evidence="2">
    <location>
        <begin position="77"/>
        <end position="98"/>
    </location>
</feature>
<feature type="transmembrane region" description="Helical" evidence="2">
    <location>
        <begin position="113"/>
        <end position="133"/>
    </location>
</feature>
<feature type="transmembrane region" description="Helical" evidence="2">
    <location>
        <begin position="178"/>
        <end position="198"/>
    </location>
</feature>
<feature type="transmembrane region" description="Helical" evidence="2">
    <location>
        <begin position="226"/>
        <end position="246"/>
    </location>
</feature>
<feature type="transmembrane region" description="Helical" evidence="2">
    <location>
        <begin position="288"/>
        <end position="308"/>
    </location>
</feature>
<feature type="transmembrane region" description="Helical" evidence="2">
    <location>
        <begin position="320"/>
        <end position="340"/>
    </location>
</feature>
<feature type="transmembrane region" description="Helical" evidence="2">
    <location>
        <begin position="347"/>
        <end position="367"/>
    </location>
</feature>
<feature type="binding site" description="axial binding residue" evidence="2">
    <location>
        <position position="83"/>
    </location>
    <ligand>
        <name>heme b</name>
        <dbReference type="ChEBI" id="CHEBI:60344"/>
        <label>b562</label>
    </ligand>
    <ligandPart>
        <name>Fe</name>
        <dbReference type="ChEBI" id="CHEBI:18248"/>
    </ligandPart>
</feature>
<feature type="binding site" description="axial binding residue" evidence="2">
    <location>
        <position position="97"/>
    </location>
    <ligand>
        <name>heme b</name>
        <dbReference type="ChEBI" id="CHEBI:60344"/>
        <label>b566</label>
    </ligand>
    <ligandPart>
        <name>Fe</name>
        <dbReference type="ChEBI" id="CHEBI:18248"/>
    </ligandPart>
</feature>
<feature type="binding site" description="axial binding residue" evidence="2">
    <location>
        <position position="182"/>
    </location>
    <ligand>
        <name>heme b</name>
        <dbReference type="ChEBI" id="CHEBI:60344"/>
        <label>b562</label>
    </ligand>
    <ligandPart>
        <name>Fe</name>
        <dbReference type="ChEBI" id="CHEBI:18248"/>
    </ligandPart>
</feature>
<feature type="binding site" description="axial binding residue" evidence="2">
    <location>
        <position position="196"/>
    </location>
    <ligand>
        <name>heme b</name>
        <dbReference type="ChEBI" id="CHEBI:60344"/>
        <label>b566</label>
    </ligand>
    <ligandPart>
        <name>Fe</name>
        <dbReference type="ChEBI" id="CHEBI:18248"/>
    </ligandPart>
</feature>
<feature type="binding site" evidence="2">
    <location>
        <position position="201"/>
    </location>
    <ligand>
        <name>a ubiquinone</name>
        <dbReference type="ChEBI" id="CHEBI:16389"/>
    </ligand>
</feature>
<gene>
    <name type="primary">MT-CYB</name>
    <name type="synonym">COB</name>
    <name type="synonym">CYTB</name>
    <name type="synonym">MTCYB</name>
</gene>
<name>CYB_MUNRE</name>
<comment type="function">
    <text evidence="2">Component of the ubiquinol-cytochrome c reductase complex (complex III or cytochrome b-c1 complex) that is part of the mitochondrial respiratory chain. The b-c1 complex mediates electron transfer from ubiquinol to cytochrome c. Contributes to the generation of a proton gradient across the mitochondrial membrane that is then used for ATP synthesis.</text>
</comment>
<comment type="cofactor">
    <cofactor evidence="2">
        <name>heme b</name>
        <dbReference type="ChEBI" id="CHEBI:60344"/>
    </cofactor>
    <text evidence="2">Binds 2 heme b groups non-covalently.</text>
</comment>
<comment type="subunit">
    <text evidence="2">The cytochrome bc1 complex contains 11 subunits: 3 respiratory subunits (MT-CYB, CYC1 and UQCRFS1), 2 core proteins (UQCRC1 and UQCRC2) and 6 low-molecular weight proteins (UQCRH/QCR6, UQCRB/QCR7, UQCRQ/QCR8, UQCR10/QCR9, UQCR11/QCR10 and a cleavage product of UQCRFS1). This cytochrome bc1 complex then forms a dimer.</text>
</comment>
<comment type="subcellular location">
    <subcellularLocation>
        <location evidence="2">Mitochondrion inner membrane</location>
        <topology evidence="2">Multi-pass membrane protein</topology>
    </subcellularLocation>
</comment>
<comment type="miscellaneous">
    <text evidence="1">Heme 1 (or BL or b562) is low-potential and absorbs at about 562 nm, and heme 2 (or BH or b566) is high-potential and absorbs at about 566 nm.</text>
</comment>
<comment type="similarity">
    <text evidence="3 4">Belongs to the cytochrome b family.</text>
</comment>
<comment type="caution">
    <text evidence="2">The full-length protein contains only eight transmembrane helices, not nine as predicted by bioinformatics tools.</text>
</comment>
<sequence>MTNIRKTHPLMKIVNNAFIDLPAPSNISSWWNFGSLLGICLILQILTGLFLAMHYTSDTMTAFSSVTHICRDVNYGWIIRYMHANGASMFFICLFIHVGRGLYYGSYTFLETWNIGVILLFTVMATAFVGYVLPWGQMSFWGATVITNLLSAIPYIGTNLVEWIWGGFSVDKATLTRFFAFHFILPFIIAALAMVHLLFLHETGSNNPTGIPSDADKIPFHPYYTIKDILGALLLILSLMLLVLFAPDLLGDPDNYTPANPLNTPPHIKPEWYFLFAYAILRSIPNKLGGVLALISSILVLILMPLLHTSKQRSMIFRPLSQCLFWILVADLLTLTWIGGQPVEHPFIIIGQLASILYFLIILVLMPIISTIENNLLKW</sequence>
<reference key="1">
    <citation type="submission" date="2002-07" db="EMBL/GenBank/DDBJ databases">
        <authorList>
            <person name="Zhang X.M."/>
            <person name="Zhang H.J."/>
            <person name="Mou Y."/>
            <person name="Li J."/>
            <person name="Yi G.C."/>
            <person name="Shan X.N."/>
        </authorList>
    </citation>
    <scope>NUCLEOTIDE SEQUENCE [GENOMIC DNA]</scope>
</reference>
<dbReference type="EMBL" id="AF527537">
    <property type="protein sequence ID" value="AAM77759.1"/>
    <property type="molecule type" value="Genomic_DNA"/>
</dbReference>
<dbReference type="RefSeq" id="NP_663804.1">
    <property type="nucleotide sequence ID" value="NC_004069.1"/>
</dbReference>
<dbReference type="SMR" id="Q8M0K9"/>
<dbReference type="GeneID" id="805182"/>
<dbReference type="KEGG" id="mree:805182"/>
<dbReference type="CTD" id="4519"/>
<dbReference type="GO" id="GO:0005743">
    <property type="term" value="C:mitochondrial inner membrane"/>
    <property type="evidence" value="ECO:0007669"/>
    <property type="project" value="UniProtKB-SubCell"/>
</dbReference>
<dbReference type="GO" id="GO:0045275">
    <property type="term" value="C:respiratory chain complex III"/>
    <property type="evidence" value="ECO:0007669"/>
    <property type="project" value="InterPro"/>
</dbReference>
<dbReference type="GO" id="GO:0046872">
    <property type="term" value="F:metal ion binding"/>
    <property type="evidence" value="ECO:0007669"/>
    <property type="project" value="UniProtKB-KW"/>
</dbReference>
<dbReference type="GO" id="GO:0008121">
    <property type="term" value="F:ubiquinol-cytochrome-c reductase activity"/>
    <property type="evidence" value="ECO:0007669"/>
    <property type="project" value="InterPro"/>
</dbReference>
<dbReference type="GO" id="GO:0006122">
    <property type="term" value="P:mitochondrial electron transport, ubiquinol to cytochrome c"/>
    <property type="evidence" value="ECO:0007669"/>
    <property type="project" value="TreeGrafter"/>
</dbReference>
<dbReference type="CDD" id="cd00290">
    <property type="entry name" value="cytochrome_b_C"/>
    <property type="match status" value="1"/>
</dbReference>
<dbReference type="CDD" id="cd00284">
    <property type="entry name" value="Cytochrome_b_N"/>
    <property type="match status" value="1"/>
</dbReference>
<dbReference type="FunFam" id="1.20.810.10:FF:000002">
    <property type="entry name" value="Cytochrome b"/>
    <property type="match status" value="1"/>
</dbReference>
<dbReference type="Gene3D" id="1.20.810.10">
    <property type="entry name" value="Cytochrome Bc1 Complex, Chain C"/>
    <property type="match status" value="1"/>
</dbReference>
<dbReference type="InterPro" id="IPR005798">
    <property type="entry name" value="Cyt_b/b6_C"/>
</dbReference>
<dbReference type="InterPro" id="IPR036150">
    <property type="entry name" value="Cyt_b/b6_C_sf"/>
</dbReference>
<dbReference type="InterPro" id="IPR005797">
    <property type="entry name" value="Cyt_b/b6_N"/>
</dbReference>
<dbReference type="InterPro" id="IPR027387">
    <property type="entry name" value="Cytb/b6-like_sf"/>
</dbReference>
<dbReference type="InterPro" id="IPR030689">
    <property type="entry name" value="Cytochrome_b"/>
</dbReference>
<dbReference type="InterPro" id="IPR048260">
    <property type="entry name" value="Cytochrome_b_C_euk/bac"/>
</dbReference>
<dbReference type="InterPro" id="IPR048259">
    <property type="entry name" value="Cytochrome_b_N_euk/bac"/>
</dbReference>
<dbReference type="InterPro" id="IPR016174">
    <property type="entry name" value="Di-haem_cyt_TM"/>
</dbReference>
<dbReference type="PANTHER" id="PTHR19271">
    <property type="entry name" value="CYTOCHROME B"/>
    <property type="match status" value="1"/>
</dbReference>
<dbReference type="PANTHER" id="PTHR19271:SF16">
    <property type="entry name" value="CYTOCHROME B"/>
    <property type="match status" value="1"/>
</dbReference>
<dbReference type="Pfam" id="PF00032">
    <property type="entry name" value="Cytochrom_B_C"/>
    <property type="match status" value="1"/>
</dbReference>
<dbReference type="Pfam" id="PF00033">
    <property type="entry name" value="Cytochrome_B"/>
    <property type="match status" value="1"/>
</dbReference>
<dbReference type="PIRSF" id="PIRSF038885">
    <property type="entry name" value="COB"/>
    <property type="match status" value="1"/>
</dbReference>
<dbReference type="SUPFAM" id="SSF81648">
    <property type="entry name" value="a domain/subunit of cytochrome bc1 complex (Ubiquinol-cytochrome c reductase)"/>
    <property type="match status" value="1"/>
</dbReference>
<dbReference type="SUPFAM" id="SSF81342">
    <property type="entry name" value="Transmembrane di-heme cytochromes"/>
    <property type="match status" value="1"/>
</dbReference>
<dbReference type="PROSITE" id="PS51003">
    <property type="entry name" value="CYTB_CTER"/>
    <property type="match status" value="1"/>
</dbReference>
<dbReference type="PROSITE" id="PS51002">
    <property type="entry name" value="CYTB_NTER"/>
    <property type="match status" value="1"/>
</dbReference>
<geneLocation type="mitochondrion"/>
<keyword id="KW-0249">Electron transport</keyword>
<keyword id="KW-0349">Heme</keyword>
<keyword id="KW-0408">Iron</keyword>
<keyword id="KW-0472">Membrane</keyword>
<keyword id="KW-0479">Metal-binding</keyword>
<keyword id="KW-0496">Mitochondrion</keyword>
<keyword id="KW-0999">Mitochondrion inner membrane</keyword>
<keyword id="KW-0679">Respiratory chain</keyword>
<keyword id="KW-0812">Transmembrane</keyword>
<keyword id="KW-1133">Transmembrane helix</keyword>
<keyword id="KW-0813">Transport</keyword>
<keyword id="KW-0830">Ubiquinone</keyword>
<proteinExistence type="inferred from homology"/>
<evidence type="ECO:0000250" key="1"/>
<evidence type="ECO:0000250" key="2">
    <source>
        <dbReference type="UniProtKB" id="P00157"/>
    </source>
</evidence>
<evidence type="ECO:0000255" key="3">
    <source>
        <dbReference type="PROSITE-ProRule" id="PRU00967"/>
    </source>
</evidence>
<evidence type="ECO:0000255" key="4">
    <source>
        <dbReference type="PROSITE-ProRule" id="PRU00968"/>
    </source>
</evidence>
<protein>
    <recommendedName>
        <fullName>Cytochrome b</fullName>
    </recommendedName>
    <alternativeName>
        <fullName>Complex III subunit 3</fullName>
    </alternativeName>
    <alternativeName>
        <fullName>Complex III subunit III</fullName>
    </alternativeName>
    <alternativeName>
        <fullName>Cytochrome b-c1 complex subunit 3</fullName>
    </alternativeName>
    <alternativeName>
        <fullName>Ubiquinol-cytochrome-c reductase complex cytochrome b subunit</fullName>
    </alternativeName>
</protein>
<organism>
    <name type="scientific">Muntiacus reevesi</name>
    <name type="common">Reeves' muntjac</name>
    <name type="synonym">Cervus reevesi</name>
    <dbReference type="NCBI Taxonomy" id="9886"/>
    <lineage>
        <taxon>Eukaryota</taxon>
        <taxon>Metazoa</taxon>
        <taxon>Chordata</taxon>
        <taxon>Craniata</taxon>
        <taxon>Vertebrata</taxon>
        <taxon>Euteleostomi</taxon>
        <taxon>Mammalia</taxon>
        <taxon>Eutheria</taxon>
        <taxon>Laurasiatheria</taxon>
        <taxon>Artiodactyla</taxon>
        <taxon>Ruminantia</taxon>
        <taxon>Pecora</taxon>
        <taxon>Cervidae</taxon>
        <taxon>Muntiacinae</taxon>
        <taxon>Muntiacus</taxon>
    </lineage>
</organism>
<accession>Q8M0K9</accession>